<sequence length="103" mass="11369">MSGRGKGGKGLGKGGAKRHRKVLRDNIQGITKPAIRRLARRGGVKRISGLIYEETRGVLKVFLENVIRDAVTYCEHAKRKTVTAMDVVYALKRQGRTLYGFGG</sequence>
<dbReference type="EMBL" id="Z46226">
    <property type="protein sequence ID" value="CAA86298.1"/>
    <property type="molecule type" value="Genomic_DNA"/>
</dbReference>
<dbReference type="PIR" id="S49485">
    <property type="entry name" value="S49485"/>
</dbReference>
<dbReference type="SMR" id="P62776"/>
<dbReference type="GO" id="GO:0000786">
    <property type="term" value="C:nucleosome"/>
    <property type="evidence" value="ECO:0007669"/>
    <property type="project" value="UniProtKB-KW"/>
</dbReference>
<dbReference type="GO" id="GO:0005634">
    <property type="term" value="C:nucleus"/>
    <property type="evidence" value="ECO:0007669"/>
    <property type="project" value="UniProtKB-SubCell"/>
</dbReference>
<dbReference type="GO" id="GO:0003677">
    <property type="term" value="F:DNA binding"/>
    <property type="evidence" value="ECO:0007669"/>
    <property type="project" value="UniProtKB-KW"/>
</dbReference>
<dbReference type="GO" id="GO:0046982">
    <property type="term" value="F:protein heterodimerization activity"/>
    <property type="evidence" value="ECO:0007669"/>
    <property type="project" value="InterPro"/>
</dbReference>
<dbReference type="GO" id="GO:0030527">
    <property type="term" value="F:structural constituent of chromatin"/>
    <property type="evidence" value="ECO:0007669"/>
    <property type="project" value="InterPro"/>
</dbReference>
<dbReference type="CDD" id="cd22912">
    <property type="entry name" value="HFD_H4"/>
    <property type="match status" value="1"/>
</dbReference>
<dbReference type="FunFam" id="1.10.20.10:FF:000002">
    <property type="entry name" value="Histone H4"/>
    <property type="match status" value="1"/>
</dbReference>
<dbReference type="Gene3D" id="1.10.20.10">
    <property type="entry name" value="Histone, subunit A"/>
    <property type="match status" value="1"/>
</dbReference>
<dbReference type="InterPro" id="IPR035425">
    <property type="entry name" value="CENP-T/H4_C"/>
</dbReference>
<dbReference type="InterPro" id="IPR009072">
    <property type="entry name" value="Histone-fold"/>
</dbReference>
<dbReference type="InterPro" id="IPR001951">
    <property type="entry name" value="Histone_H4"/>
</dbReference>
<dbReference type="InterPro" id="IPR019809">
    <property type="entry name" value="Histone_H4_CS"/>
</dbReference>
<dbReference type="PANTHER" id="PTHR10484">
    <property type="entry name" value="HISTONE H4"/>
    <property type="match status" value="1"/>
</dbReference>
<dbReference type="Pfam" id="PF15511">
    <property type="entry name" value="CENP-T_C"/>
    <property type="match status" value="1"/>
</dbReference>
<dbReference type="PRINTS" id="PR00623">
    <property type="entry name" value="HISTONEH4"/>
</dbReference>
<dbReference type="SMART" id="SM00417">
    <property type="entry name" value="H4"/>
    <property type="match status" value="1"/>
</dbReference>
<dbReference type="SUPFAM" id="SSF47113">
    <property type="entry name" value="Histone-fold"/>
    <property type="match status" value="1"/>
</dbReference>
<dbReference type="PROSITE" id="PS00047">
    <property type="entry name" value="HISTONE_H4"/>
    <property type="match status" value="1"/>
</dbReference>
<protein>
    <recommendedName>
        <fullName>Histone H4</fullName>
    </recommendedName>
</protein>
<comment type="function">
    <text>Core component of nucleosome. Nucleosomes wrap and compact DNA into chromatin, limiting DNA accessibility to the cellular machineries which require DNA as a template. Histones thereby play a central role in transcription regulation, DNA repair, DNA replication and chromosomal stability. DNA accessibility is regulated via a complex set of post-translational modifications of histones, also called histone code, and nucleosome remodeling.</text>
</comment>
<comment type="subunit">
    <text>The nucleosome is a histone octamer containing two molecules each of H2A, H2B, H3 and H4 assembled in one H3-H4 heterotetramer and two H2A-H2B heterodimers. The octamer wraps approximately 147 bp of DNA.</text>
</comment>
<comment type="subcellular location">
    <subcellularLocation>
        <location evidence="1">Nucleus</location>
    </subcellularLocation>
    <subcellularLocation>
        <location evidence="1">Chromosome</location>
    </subcellularLocation>
</comment>
<comment type="similarity">
    <text evidence="4">Belongs to the histone H4 family.</text>
</comment>
<feature type="initiator methionine" description="Removed" evidence="1">
    <location>
        <position position="1"/>
    </location>
</feature>
<feature type="chain" id="PRO_0000158319" description="Histone H4">
    <location>
        <begin position="2"/>
        <end position="103"/>
    </location>
</feature>
<feature type="DNA-binding region">
    <location>
        <begin position="17"/>
        <end position="21"/>
    </location>
</feature>
<feature type="region of interest" description="Disordered" evidence="3">
    <location>
        <begin position="1"/>
        <end position="20"/>
    </location>
</feature>
<feature type="compositionally biased region" description="Gly residues" evidence="3">
    <location>
        <begin position="1"/>
        <end position="14"/>
    </location>
</feature>
<feature type="modified residue" description="N-acetylserine" evidence="1">
    <location>
        <position position="2"/>
    </location>
</feature>
<feature type="modified residue" description="N6-acetyl-N6-methyllysine; alternate" evidence="2">
    <location>
        <position position="6"/>
    </location>
</feature>
<feature type="modified residue" description="N6-acetyl-N6-methyllysine; alternate" evidence="2">
    <location>
        <position position="13"/>
    </location>
</feature>
<feature type="modified residue" description="N6-acetyllysine" evidence="1">
    <location>
        <position position="17"/>
    </location>
</feature>
<feature type="modified residue" description="N6-methyllysine" evidence="1">
    <location>
        <position position="21"/>
    </location>
</feature>
<keyword id="KW-0007">Acetylation</keyword>
<keyword id="KW-0158">Chromosome</keyword>
<keyword id="KW-0238">DNA-binding</keyword>
<keyword id="KW-0488">Methylation</keyword>
<keyword id="KW-0544">Nucleosome core</keyword>
<keyword id="KW-0539">Nucleus</keyword>
<organism>
    <name type="scientific">Holothuria tubulosa</name>
    <name type="common">Tubular sea cucumber</name>
    <dbReference type="NCBI Taxonomy" id="7685"/>
    <lineage>
        <taxon>Eukaryota</taxon>
        <taxon>Metazoa</taxon>
        <taxon>Echinodermata</taxon>
        <taxon>Eleutherozoa</taxon>
        <taxon>Echinozoa</taxon>
        <taxon>Holothuroidea</taxon>
        <taxon>Aspidochirotacea</taxon>
        <taxon>Aspidochirotida</taxon>
        <taxon>Holothuriidae</taxon>
        <taxon>Holothuria</taxon>
    </lineage>
</organism>
<reference key="1">
    <citation type="journal article" date="1995" name="DNA Seq.">
        <title>Structure of histone H2B and H4 genes of the sea cucumber Holothuria tubulosa.</title>
        <authorList>
            <person name="Drabent B."/>
            <person name="Louroutziatis A."/>
            <person name="Prats E."/>
            <person name="Cornudella L."/>
            <person name="Doenecke D."/>
        </authorList>
    </citation>
    <scope>NUCLEOTIDE SEQUENCE [GENOMIC DNA]</scope>
</reference>
<evidence type="ECO:0000250" key="1"/>
<evidence type="ECO:0000250" key="2">
    <source>
        <dbReference type="UniProtKB" id="P62805"/>
    </source>
</evidence>
<evidence type="ECO:0000256" key="3">
    <source>
        <dbReference type="SAM" id="MobiDB-lite"/>
    </source>
</evidence>
<evidence type="ECO:0000305" key="4"/>
<name>H4_HOLTU</name>
<accession>P62776</accession>
<accession>P02306</accession>
<accession>P18678</accession>
<proteinExistence type="inferred from homology"/>